<accession>A1TDB8</accession>
<evidence type="ECO:0000255" key="1">
    <source>
        <dbReference type="HAMAP-Rule" id="MF_01657"/>
    </source>
</evidence>
<proteinExistence type="inferred from homology"/>
<name>ACDH2_MYCVP</name>
<sequence>MRKVAIIGSGNIGTDLMIKVLRVSDLLEVAAMVGIDPDSDGLARARRLKVQTTHEGVEGLLALDEFDEIDIVFDATSAGAHIKNAETLRKFGKYLVDLTPAAIGPFVVPAVNLTDQLNRNVDNVNMVTCGGQATIPIVAAVSQVTPVAYAEIVASISSKSAGPGTRANIDEFTETTAQAIESVGGAARGKAIIILNPADPPVIMRDTVLCLTGDVDQDAVRDSVSTMVEEVSRYVPGYHLKQEVQFDRVSAADVRTLLPAGVGTVSTQISVFLEVEGAAHYLPAYAGNLDIMTSAALRVGEGIAERLNHAEAPRRSRA</sequence>
<gene>
    <name type="ordered locus">Mvan_4392</name>
</gene>
<dbReference type="EC" id="1.2.1.10" evidence="1"/>
<dbReference type="EMBL" id="CP000511">
    <property type="protein sequence ID" value="ABM15168.1"/>
    <property type="molecule type" value="Genomic_DNA"/>
</dbReference>
<dbReference type="SMR" id="A1TDB8"/>
<dbReference type="STRING" id="350058.Mvan_4392"/>
<dbReference type="KEGG" id="mva:Mvan_4392"/>
<dbReference type="eggNOG" id="COG4569">
    <property type="taxonomic scope" value="Bacteria"/>
</dbReference>
<dbReference type="HOGENOM" id="CLU_062208_0_0_11"/>
<dbReference type="Proteomes" id="UP000009159">
    <property type="component" value="Chromosome"/>
</dbReference>
<dbReference type="GO" id="GO:0008774">
    <property type="term" value="F:acetaldehyde dehydrogenase (acetylating) activity"/>
    <property type="evidence" value="ECO:0007669"/>
    <property type="project" value="UniProtKB-UniRule"/>
</dbReference>
<dbReference type="GO" id="GO:0051287">
    <property type="term" value="F:NAD binding"/>
    <property type="evidence" value="ECO:0007669"/>
    <property type="project" value="UniProtKB-UniRule"/>
</dbReference>
<dbReference type="GO" id="GO:0009056">
    <property type="term" value="P:catabolic process"/>
    <property type="evidence" value="ECO:0007669"/>
    <property type="project" value="UniProtKB-KW"/>
</dbReference>
<dbReference type="CDD" id="cd23933">
    <property type="entry name" value="ALDH_C"/>
    <property type="match status" value="1"/>
</dbReference>
<dbReference type="Gene3D" id="3.30.360.10">
    <property type="entry name" value="Dihydrodipicolinate Reductase, domain 2"/>
    <property type="match status" value="1"/>
</dbReference>
<dbReference type="Gene3D" id="3.40.50.720">
    <property type="entry name" value="NAD(P)-binding Rossmann-like Domain"/>
    <property type="match status" value="1"/>
</dbReference>
<dbReference type="HAMAP" id="MF_01657">
    <property type="entry name" value="Ac_ald_DH_ac"/>
    <property type="match status" value="1"/>
</dbReference>
<dbReference type="InterPro" id="IPR003361">
    <property type="entry name" value="Acetaldehyde_dehydrogenase"/>
</dbReference>
<dbReference type="InterPro" id="IPR015426">
    <property type="entry name" value="Acetylaldehyde_DH_C"/>
</dbReference>
<dbReference type="InterPro" id="IPR036291">
    <property type="entry name" value="NAD(P)-bd_dom_sf"/>
</dbReference>
<dbReference type="InterPro" id="IPR000534">
    <property type="entry name" value="Semialdehyde_DH_NAD-bd"/>
</dbReference>
<dbReference type="NCBIfam" id="TIGR03215">
    <property type="entry name" value="ac_ald_DH_ac"/>
    <property type="match status" value="1"/>
</dbReference>
<dbReference type="NCBIfam" id="NF006157">
    <property type="entry name" value="PRK08300.1"/>
    <property type="match status" value="1"/>
</dbReference>
<dbReference type="Pfam" id="PF09290">
    <property type="entry name" value="AcetDehyd-dimer"/>
    <property type="match status" value="1"/>
</dbReference>
<dbReference type="Pfam" id="PF01118">
    <property type="entry name" value="Semialdhyde_dh"/>
    <property type="match status" value="1"/>
</dbReference>
<dbReference type="PIRSF" id="PIRSF015689">
    <property type="entry name" value="Actaldh_dh_actl"/>
    <property type="match status" value="1"/>
</dbReference>
<dbReference type="SMART" id="SM00859">
    <property type="entry name" value="Semialdhyde_dh"/>
    <property type="match status" value="1"/>
</dbReference>
<dbReference type="SUPFAM" id="SSF55347">
    <property type="entry name" value="Glyceraldehyde-3-phosphate dehydrogenase-like, C-terminal domain"/>
    <property type="match status" value="1"/>
</dbReference>
<dbReference type="SUPFAM" id="SSF51735">
    <property type="entry name" value="NAD(P)-binding Rossmann-fold domains"/>
    <property type="match status" value="1"/>
</dbReference>
<organism>
    <name type="scientific">Mycolicibacterium vanbaalenii (strain DSM 7251 / JCM 13017 / BCRC 16820 / KCTC 9966 / NRRL B-24157 / PYR-1)</name>
    <name type="common">Mycobacterium vanbaalenii</name>
    <dbReference type="NCBI Taxonomy" id="350058"/>
    <lineage>
        <taxon>Bacteria</taxon>
        <taxon>Bacillati</taxon>
        <taxon>Actinomycetota</taxon>
        <taxon>Actinomycetes</taxon>
        <taxon>Mycobacteriales</taxon>
        <taxon>Mycobacteriaceae</taxon>
        <taxon>Mycolicibacterium</taxon>
    </lineage>
</organism>
<protein>
    <recommendedName>
        <fullName evidence="1">Acetaldehyde dehydrogenase 2</fullName>
        <ecNumber evidence="1">1.2.1.10</ecNumber>
    </recommendedName>
    <alternativeName>
        <fullName evidence="1">Acetaldehyde dehydrogenase [acetylating] 2</fullName>
    </alternativeName>
</protein>
<keyword id="KW-0058">Aromatic hydrocarbons catabolism</keyword>
<keyword id="KW-0520">NAD</keyword>
<keyword id="KW-0560">Oxidoreductase</keyword>
<feature type="chain" id="PRO_0000387693" description="Acetaldehyde dehydrogenase 2">
    <location>
        <begin position="1"/>
        <end position="318"/>
    </location>
</feature>
<feature type="active site" description="Acyl-thioester intermediate" evidence="1">
    <location>
        <position position="129"/>
    </location>
</feature>
<feature type="binding site" evidence="1">
    <location>
        <begin position="9"/>
        <end position="12"/>
    </location>
    <ligand>
        <name>NAD(+)</name>
        <dbReference type="ChEBI" id="CHEBI:57540"/>
    </ligand>
</feature>
<feature type="binding site" evidence="1">
    <location>
        <begin position="160"/>
        <end position="168"/>
    </location>
    <ligand>
        <name>NAD(+)</name>
        <dbReference type="ChEBI" id="CHEBI:57540"/>
    </ligand>
</feature>
<feature type="binding site" evidence="1">
    <location>
        <position position="288"/>
    </location>
    <ligand>
        <name>NAD(+)</name>
        <dbReference type="ChEBI" id="CHEBI:57540"/>
    </ligand>
</feature>
<reference key="1">
    <citation type="submission" date="2006-12" db="EMBL/GenBank/DDBJ databases">
        <title>Complete sequence of Mycobacterium vanbaalenii PYR-1.</title>
        <authorList>
            <consortium name="US DOE Joint Genome Institute"/>
            <person name="Copeland A."/>
            <person name="Lucas S."/>
            <person name="Lapidus A."/>
            <person name="Barry K."/>
            <person name="Detter J.C."/>
            <person name="Glavina del Rio T."/>
            <person name="Hammon N."/>
            <person name="Israni S."/>
            <person name="Dalin E."/>
            <person name="Tice H."/>
            <person name="Pitluck S."/>
            <person name="Singan V."/>
            <person name="Schmutz J."/>
            <person name="Larimer F."/>
            <person name="Land M."/>
            <person name="Hauser L."/>
            <person name="Kyrpides N."/>
            <person name="Anderson I.J."/>
            <person name="Miller C."/>
            <person name="Richardson P."/>
        </authorList>
    </citation>
    <scope>NUCLEOTIDE SEQUENCE [LARGE SCALE GENOMIC DNA]</scope>
    <source>
        <strain>DSM 7251 / JCM 13017 / BCRC 16820 / KCTC 9966 / NRRL B-24157 / PYR-1</strain>
    </source>
</reference>
<comment type="catalytic activity">
    <reaction evidence="1">
        <text>acetaldehyde + NAD(+) + CoA = acetyl-CoA + NADH + H(+)</text>
        <dbReference type="Rhea" id="RHEA:23288"/>
        <dbReference type="ChEBI" id="CHEBI:15343"/>
        <dbReference type="ChEBI" id="CHEBI:15378"/>
        <dbReference type="ChEBI" id="CHEBI:57287"/>
        <dbReference type="ChEBI" id="CHEBI:57288"/>
        <dbReference type="ChEBI" id="CHEBI:57540"/>
        <dbReference type="ChEBI" id="CHEBI:57945"/>
        <dbReference type="EC" id="1.2.1.10"/>
    </reaction>
</comment>
<comment type="similarity">
    <text evidence="1">Belongs to the acetaldehyde dehydrogenase family.</text>
</comment>